<comment type="function">
    <text evidence="1">Participates in chromosomal partition during cell division. May act via the formation of a condensin-like complex containing Smc and ScpA that pull DNA away from mid-cell into both cell halves.</text>
</comment>
<comment type="subunit">
    <text evidence="1">Homodimer. Homodimerization may be required to stabilize the binding of ScpA to the Smc head domains. Component of a cohesin-like complex composed of ScpA, ScpB and the Smc homodimer, in which ScpA and ScpB bind to the head domain of Smc. The presence of the three proteins is required for the association of the complex with DNA.</text>
</comment>
<comment type="subcellular location">
    <subcellularLocation>
        <location evidence="1">Cytoplasm</location>
    </subcellularLocation>
    <text evidence="1">Associated with two foci at the outer edges of the nucleoid region in young cells, and at four foci within both cell halves in older cells.</text>
</comment>
<comment type="similarity">
    <text evidence="1">Belongs to the ScpB family.</text>
</comment>
<name>SCPB_GEOTN</name>
<organism>
    <name type="scientific">Geobacillus thermodenitrificans (strain NG80-2)</name>
    <dbReference type="NCBI Taxonomy" id="420246"/>
    <lineage>
        <taxon>Bacteria</taxon>
        <taxon>Bacillati</taxon>
        <taxon>Bacillota</taxon>
        <taxon>Bacilli</taxon>
        <taxon>Bacillales</taxon>
        <taxon>Anoxybacillaceae</taxon>
        <taxon>Geobacillus</taxon>
    </lineage>
</organism>
<sequence>MEQQETVKKDDASSARPAKAIVEALLFAAGDEGLSLAQIAAVLDVDESEAKAVIAALQEDYSREERGIQLMELAGVFLLATKKEHASYLKKLVEAPGASSLSQAALETLAIIAYRQPITRAEIEEIRGVKSDKPLQTLMARALIKEVGRAEGTGRPILYGTTAEFLDYFGLKTLEELPPLPEWADDGELEREADLFFEKLAENLSDEKP</sequence>
<evidence type="ECO:0000255" key="1">
    <source>
        <dbReference type="HAMAP-Rule" id="MF_01804"/>
    </source>
</evidence>
<reference key="1">
    <citation type="journal article" date="2007" name="Proc. Natl. Acad. Sci. U.S.A.">
        <title>Genome and proteome of long-chain alkane degrading Geobacillus thermodenitrificans NG80-2 isolated from a deep-subsurface oil reservoir.</title>
        <authorList>
            <person name="Feng L."/>
            <person name="Wang W."/>
            <person name="Cheng J."/>
            <person name="Ren Y."/>
            <person name="Zhao G."/>
            <person name="Gao C."/>
            <person name="Tang Y."/>
            <person name="Liu X."/>
            <person name="Han W."/>
            <person name="Peng X."/>
            <person name="Liu R."/>
            <person name="Wang L."/>
        </authorList>
    </citation>
    <scope>NUCLEOTIDE SEQUENCE [LARGE SCALE GENOMIC DNA]</scope>
    <source>
        <strain>NG80-2</strain>
    </source>
</reference>
<accession>A4IQG3</accession>
<proteinExistence type="inferred from homology"/>
<gene>
    <name evidence="1" type="primary">scpB</name>
    <name type="ordered locus">GTNG_2218</name>
</gene>
<dbReference type="EMBL" id="CP000557">
    <property type="protein sequence ID" value="ABO67567.1"/>
    <property type="molecule type" value="Genomic_DNA"/>
</dbReference>
<dbReference type="RefSeq" id="WP_008879699.1">
    <property type="nucleotide sequence ID" value="NC_009328.1"/>
</dbReference>
<dbReference type="SMR" id="A4IQG3"/>
<dbReference type="GeneID" id="87623679"/>
<dbReference type="KEGG" id="gtn:GTNG_2218"/>
<dbReference type="eggNOG" id="COG1386">
    <property type="taxonomic scope" value="Bacteria"/>
</dbReference>
<dbReference type="HOGENOM" id="CLU_045647_5_3_9"/>
<dbReference type="Proteomes" id="UP000001578">
    <property type="component" value="Chromosome"/>
</dbReference>
<dbReference type="GO" id="GO:0005737">
    <property type="term" value="C:cytoplasm"/>
    <property type="evidence" value="ECO:0007669"/>
    <property type="project" value="UniProtKB-SubCell"/>
</dbReference>
<dbReference type="GO" id="GO:0051301">
    <property type="term" value="P:cell division"/>
    <property type="evidence" value="ECO:0007669"/>
    <property type="project" value="UniProtKB-KW"/>
</dbReference>
<dbReference type="GO" id="GO:0051304">
    <property type="term" value="P:chromosome separation"/>
    <property type="evidence" value="ECO:0007669"/>
    <property type="project" value="InterPro"/>
</dbReference>
<dbReference type="GO" id="GO:0006260">
    <property type="term" value="P:DNA replication"/>
    <property type="evidence" value="ECO:0007669"/>
    <property type="project" value="UniProtKB-UniRule"/>
</dbReference>
<dbReference type="Gene3D" id="1.10.10.10">
    <property type="entry name" value="Winged helix-like DNA-binding domain superfamily/Winged helix DNA-binding domain"/>
    <property type="match status" value="2"/>
</dbReference>
<dbReference type="HAMAP" id="MF_01804">
    <property type="entry name" value="ScpB"/>
    <property type="match status" value="1"/>
</dbReference>
<dbReference type="InterPro" id="IPR005234">
    <property type="entry name" value="ScpB_csome_segregation"/>
</dbReference>
<dbReference type="InterPro" id="IPR036388">
    <property type="entry name" value="WH-like_DNA-bd_sf"/>
</dbReference>
<dbReference type="InterPro" id="IPR036390">
    <property type="entry name" value="WH_DNA-bd_sf"/>
</dbReference>
<dbReference type="NCBIfam" id="TIGR00281">
    <property type="entry name" value="SMC-Scp complex subunit ScpB"/>
    <property type="match status" value="1"/>
</dbReference>
<dbReference type="PANTHER" id="PTHR34298">
    <property type="entry name" value="SEGREGATION AND CONDENSATION PROTEIN B"/>
    <property type="match status" value="1"/>
</dbReference>
<dbReference type="PANTHER" id="PTHR34298:SF2">
    <property type="entry name" value="SEGREGATION AND CONDENSATION PROTEIN B"/>
    <property type="match status" value="1"/>
</dbReference>
<dbReference type="Pfam" id="PF04079">
    <property type="entry name" value="SMC_ScpB"/>
    <property type="match status" value="1"/>
</dbReference>
<dbReference type="PIRSF" id="PIRSF019345">
    <property type="entry name" value="ScpB"/>
    <property type="match status" value="1"/>
</dbReference>
<dbReference type="SUPFAM" id="SSF46785">
    <property type="entry name" value="Winged helix' DNA-binding domain"/>
    <property type="match status" value="2"/>
</dbReference>
<feature type="chain" id="PRO_1000069955" description="Segregation and condensation protein B">
    <location>
        <begin position="1"/>
        <end position="209"/>
    </location>
</feature>
<protein>
    <recommendedName>
        <fullName evidence="1">Segregation and condensation protein B</fullName>
    </recommendedName>
</protein>
<keyword id="KW-0131">Cell cycle</keyword>
<keyword id="KW-0132">Cell division</keyword>
<keyword id="KW-0159">Chromosome partition</keyword>
<keyword id="KW-0963">Cytoplasm</keyword>